<protein>
    <recommendedName>
        <fullName evidence="1">CDP-archaeol synthase</fullName>
        <ecNumber evidence="1">2.7.7.67</ecNumber>
    </recommendedName>
    <alternativeName>
        <fullName evidence="1">CDP-2,3-bis-(O-geranylgeranyl)-sn-glycerol synthase</fullName>
    </alternativeName>
</protein>
<reference key="1">
    <citation type="journal article" date="2007" name="Archaea">
        <title>The genome of Hyperthermus butylicus: a sulfur-reducing, peptide fermenting, neutrophilic Crenarchaeote growing up to 108 degrees C.</title>
        <authorList>
            <person name="Bruegger K."/>
            <person name="Chen L."/>
            <person name="Stark M."/>
            <person name="Zibat A."/>
            <person name="Redder P."/>
            <person name="Ruepp A."/>
            <person name="Awayez M."/>
            <person name="She Q."/>
            <person name="Garrett R.A."/>
            <person name="Klenk H.-P."/>
        </authorList>
    </citation>
    <scope>NUCLEOTIDE SEQUENCE [LARGE SCALE GENOMIC DNA]</scope>
    <source>
        <strain>DSM 5456 / JCM 9403 / PLM1-5</strain>
    </source>
</reference>
<dbReference type="EC" id="2.7.7.67" evidence="1"/>
<dbReference type="EMBL" id="CP000493">
    <property type="protein sequence ID" value="ABM81453.1"/>
    <property type="molecule type" value="Genomic_DNA"/>
</dbReference>
<dbReference type="RefSeq" id="WP_011822771.1">
    <property type="nucleotide sequence ID" value="NC_008818.1"/>
</dbReference>
<dbReference type="SMR" id="A2BN92"/>
<dbReference type="STRING" id="415426.Hbut_1639"/>
<dbReference type="EnsemblBacteria" id="ABM81453">
    <property type="protein sequence ID" value="ABM81453"/>
    <property type="gene ID" value="Hbut_1639"/>
</dbReference>
<dbReference type="GeneID" id="4782580"/>
<dbReference type="KEGG" id="hbu:Hbut_1639"/>
<dbReference type="eggNOG" id="arCOG04106">
    <property type="taxonomic scope" value="Archaea"/>
</dbReference>
<dbReference type="HOGENOM" id="CLU_105710_0_0_2"/>
<dbReference type="OrthoDB" id="45383at2157"/>
<dbReference type="UniPathway" id="UPA00940"/>
<dbReference type="Proteomes" id="UP000002593">
    <property type="component" value="Chromosome"/>
</dbReference>
<dbReference type="GO" id="GO:0005886">
    <property type="term" value="C:plasma membrane"/>
    <property type="evidence" value="ECO:0007669"/>
    <property type="project" value="UniProtKB-SubCell"/>
</dbReference>
<dbReference type="GO" id="GO:0043338">
    <property type="term" value="F:CDP-2,3-bis-(O-geranylgeranyl)-sn-glycerol synthase activity"/>
    <property type="evidence" value="ECO:0007669"/>
    <property type="project" value="UniProtKB-EC"/>
</dbReference>
<dbReference type="GO" id="GO:0046474">
    <property type="term" value="P:glycerophospholipid biosynthetic process"/>
    <property type="evidence" value="ECO:0007669"/>
    <property type="project" value="UniProtKB-UniRule"/>
</dbReference>
<dbReference type="HAMAP" id="MF_01117">
    <property type="entry name" value="CDP_archaeol_synth"/>
    <property type="match status" value="1"/>
</dbReference>
<dbReference type="InterPro" id="IPR032690">
    <property type="entry name" value="CarS"/>
</dbReference>
<dbReference type="InterPro" id="IPR002726">
    <property type="entry name" value="CarS_archaea"/>
</dbReference>
<dbReference type="NCBIfam" id="NF003114">
    <property type="entry name" value="PRK04032.1"/>
    <property type="match status" value="1"/>
</dbReference>
<dbReference type="PANTHER" id="PTHR39650">
    <property type="entry name" value="CDP-ARCHAEOL SYNTHASE"/>
    <property type="match status" value="1"/>
</dbReference>
<dbReference type="PANTHER" id="PTHR39650:SF1">
    <property type="entry name" value="CDP-ARCHAEOL SYNTHASE"/>
    <property type="match status" value="1"/>
</dbReference>
<dbReference type="Pfam" id="PF01864">
    <property type="entry name" value="CarS-like"/>
    <property type="match status" value="1"/>
</dbReference>
<proteinExistence type="inferred from homology"/>
<comment type="function">
    <text evidence="1">Catalyzes the formation of CDP-2,3-bis-(O-geranylgeranyl)-sn-glycerol (CDP-archaeol) from 2,3-bis-(O-geranylgeranyl)-sn-glycerol 1-phosphate (DGGGP) and CTP. This reaction is the third ether-bond-formation step in the biosynthesis of archaeal membrane lipids.</text>
</comment>
<comment type="catalytic activity">
    <reaction evidence="1">
        <text>2,3-bis-O-(geranylgeranyl)-sn-glycerol 1-phosphate + CTP + H(+) = CDP-2,3-bis-O-(geranylgeranyl)-sn-glycerol + diphosphate</text>
        <dbReference type="Rhea" id="RHEA:25690"/>
        <dbReference type="ChEBI" id="CHEBI:15378"/>
        <dbReference type="ChEBI" id="CHEBI:33019"/>
        <dbReference type="ChEBI" id="CHEBI:37563"/>
        <dbReference type="ChEBI" id="CHEBI:58837"/>
        <dbReference type="ChEBI" id="CHEBI:58838"/>
        <dbReference type="EC" id="2.7.7.67"/>
    </reaction>
</comment>
<comment type="cofactor">
    <cofactor evidence="1">
        <name>Mg(2+)</name>
        <dbReference type="ChEBI" id="CHEBI:18420"/>
    </cofactor>
</comment>
<comment type="pathway">
    <text evidence="1">Membrane lipid metabolism; glycerophospholipid metabolism.</text>
</comment>
<comment type="subcellular location">
    <subcellularLocation>
        <location evidence="1">Cell membrane</location>
        <topology evidence="1">Multi-pass membrane protein</topology>
    </subcellularLocation>
</comment>
<comment type="similarity">
    <text evidence="1">Belongs to the CDP-archaeol synthase family.</text>
</comment>
<gene>
    <name evidence="1" type="primary">carS</name>
    <name type="ordered locus">Hbut_1639</name>
</gene>
<feature type="chain" id="PRO_0000298275" description="CDP-archaeol synthase">
    <location>
        <begin position="1"/>
        <end position="168"/>
    </location>
</feature>
<feature type="transmembrane region" description="Helical" evidence="1">
    <location>
        <begin position="7"/>
        <end position="27"/>
    </location>
</feature>
<feature type="transmembrane region" description="Helical" evidence="1">
    <location>
        <begin position="55"/>
        <end position="75"/>
    </location>
</feature>
<feature type="transmembrane region" description="Helical" evidence="1">
    <location>
        <begin position="80"/>
        <end position="100"/>
    </location>
</feature>
<feature type="transmembrane region" description="Helical" evidence="1">
    <location>
        <begin position="109"/>
        <end position="129"/>
    </location>
</feature>
<feature type="transmembrane region" description="Helical" evidence="1">
    <location>
        <begin position="130"/>
        <end position="150"/>
    </location>
</feature>
<organism>
    <name type="scientific">Hyperthermus butylicus (strain DSM 5456 / JCM 9403 / PLM1-5)</name>
    <dbReference type="NCBI Taxonomy" id="415426"/>
    <lineage>
        <taxon>Archaea</taxon>
        <taxon>Thermoproteota</taxon>
        <taxon>Thermoprotei</taxon>
        <taxon>Desulfurococcales</taxon>
        <taxon>Pyrodictiaceae</taxon>
        <taxon>Hyperthermus</taxon>
    </lineage>
</organism>
<sequence length="168" mass="17597">MAQLLTPLESILAIIPALAANGAPVLLKYHGTPIDGGKRFLDGRPVLGPGKTWEGLATGILYGSVIALLAASATCNPKLYAAGVFASIGAMLGDMLGAFIKRRLGLERGAPAPLLDQLDFYSGALLALYAAGYVVHPAVALTFTPIVIALHRLTNMAANRLRLKPVPW</sequence>
<keyword id="KW-1003">Cell membrane</keyword>
<keyword id="KW-0444">Lipid biosynthesis</keyword>
<keyword id="KW-0443">Lipid metabolism</keyword>
<keyword id="KW-0460">Magnesium</keyword>
<keyword id="KW-0472">Membrane</keyword>
<keyword id="KW-0594">Phospholipid biosynthesis</keyword>
<keyword id="KW-1208">Phospholipid metabolism</keyword>
<keyword id="KW-1185">Reference proteome</keyword>
<keyword id="KW-0808">Transferase</keyword>
<keyword id="KW-0812">Transmembrane</keyword>
<keyword id="KW-1133">Transmembrane helix</keyword>
<evidence type="ECO:0000255" key="1">
    <source>
        <dbReference type="HAMAP-Rule" id="MF_01117"/>
    </source>
</evidence>
<name>CDPAS_HYPBU</name>
<accession>A2BN92</accession>